<comment type="function">
    <text evidence="1">Allows the formation of correctly charged Asn-tRNA(Asn) or Gln-tRNA(Gln) through the transamidation of misacylated Asp-tRNA(Asn) or Glu-tRNA(Gln) in organisms which lack either or both of asparaginyl-tRNA or glutaminyl-tRNA synthetases. The reaction takes place in the presence of glutamine and ATP through an activated phospho-Asp-tRNA(Asn) or phospho-Glu-tRNA(Gln).</text>
</comment>
<comment type="catalytic activity">
    <reaction evidence="1">
        <text>L-glutamyl-tRNA(Gln) + L-glutamine + ATP + H2O = L-glutaminyl-tRNA(Gln) + L-glutamate + ADP + phosphate + H(+)</text>
        <dbReference type="Rhea" id="RHEA:17521"/>
        <dbReference type="Rhea" id="RHEA-COMP:9681"/>
        <dbReference type="Rhea" id="RHEA-COMP:9684"/>
        <dbReference type="ChEBI" id="CHEBI:15377"/>
        <dbReference type="ChEBI" id="CHEBI:15378"/>
        <dbReference type="ChEBI" id="CHEBI:29985"/>
        <dbReference type="ChEBI" id="CHEBI:30616"/>
        <dbReference type="ChEBI" id="CHEBI:43474"/>
        <dbReference type="ChEBI" id="CHEBI:58359"/>
        <dbReference type="ChEBI" id="CHEBI:78520"/>
        <dbReference type="ChEBI" id="CHEBI:78521"/>
        <dbReference type="ChEBI" id="CHEBI:456216"/>
    </reaction>
</comment>
<comment type="catalytic activity">
    <reaction evidence="1">
        <text>L-aspartyl-tRNA(Asn) + L-glutamine + ATP + H2O = L-asparaginyl-tRNA(Asn) + L-glutamate + ADP + phosphate + 2 H(+)</text>
        <dbReference type="Rhea" id="RHEA:14513"/>
        <dbReference type="Rhea" id="RHEA-COMP:9674"/>
        <dbReference type="Rhea" id="RHEA-COMP:9677"/>
        <dbReference type="ChEBI" id="CHEBI:15377"/>
        <dbReference type="ChEBI" id="CHEBI:15378"/>
        <dbReference type="ChEBI" id="CHEBI:29985"/>
        <dbReference type="ChEBI" id="CHEBI:30616"/>
        <dbReference type="ChEBI" id="CHEBI:43474"/>
        <dbReference type="ChEBI" id="CHEBI:58359"/>
        <dbReference type="ChEBI" id="CHEBI:78515"/>
        <dbReference type="ChEBI" id="CHEBI:78516"/>
        <dbReference type="ChEBI" id="CHEBI:456216"/>
    </reaction>
</comment>
<comment type="subunit">
    <text evidence="1">Heterotrimer of A, B and C subunits.</text>
</comment>
<comment type="similarity">
    <text evidence="1">Belongs to the GatB/GatE family. GatB subfamily.</text>
</comment>
<evidence type="ECO:0000255" key="1">
    <source>
        <dbReference type="HAMAP-Rule" id="MF_00121"/>
    </source>
</evidence>
<sequence>MNAPVKPSNLIKGATGDWEMVIGLEVHAQVTSNAKLFSGASTAFGGEPNSHVSLVDAAMPGMLPVINEECVRQAVRTGLGLNAQINLRSVFDRKNYFYPDLPQGYQISQYKSPIVGEGEIVVDLADGASIAVGIERLHLEQDAGKSLHDQHADMSAIDLNRSGVALMEIVSKPDLRSSEQAKAYVTKLRTILRYLGTCDGDMEKGSLRADVNVSVRRPGAALGTRCEIKNVNSIRFIGQAIEHEARRQIGILEDGGSIDQETRLFDPDKGETRAMRSKEEAHDYRYFPDPDLLPLEFSQGFVEALKADLPELPDQKKTRFIGDFGLTPYDAAVLVGEHESANFYEAVLAGLANGRRDGKLAANWVINELFGRLNKESRGIAASPVSASQLAAIVDLIGEETISGKIAKDLFEIVWTEGGDPRTLVEARGMKQVTDMGAIEKAVDDIVAANPDKAAQVRAKPQMIGWFVGQVMKASGGKANPQAVNDLLKTKLGL</sequence>
<proteinExistence type="inferred from homology"/>
<dbReference type="EC" id="6.3.5.-" evidence="1"/>
<dbReference type="EMBL" id="CP000319">
    <property type="protein sequence ID" value="ABE63063.1"/>
    <property type="molecule type" value="Genomic_DNA"/>
</dbReference>
<dbReference type="RefSeq" id="WP_011510740.1">
    <property type="nucleotide sequence ID" value="NC_007964.1"/>
</dbReference>
<dbReference type="SMR" id="Q1QL34"/>
<dbReference type="STRING" id="323097.Nham_2271"/>
<dbReference type="KEGG" id="nha:Nham_2271"/>
<dbReference type="eggNOG" id="COG0064">
    <property type="taxonomic scope" value="Bacteria"/>
</dbReference>
<dbReference type="HOGENOM" id="CLU_019240_0_0_5"/>
<dbReference type="OrthoDB" id="9804078at2"/>
<dbReference type="Proteomes" id="UP000001953">
    <property type="component" value="Chromosome"/>
</dbReference>
<dbReference type="GO" id="GO:0050566">
    <property type="term" value="F:asparaginyl-tRNA synthase (glutamine-hydrolyzing) activity"/>
    <property type="evidence" value="ECO:0007669"/>
    <property type="project" value="RHEA"/>
</dbReference>
<dbReference type="GO" id="GO:0005524">
    <property type="term" value="F:ATP binding"/>
    <property type="evidence" value="ECO:0007669"/>
    <property type="project" value="UniProtKB-KW"/>
</dbReference>
<dbReference type="GO" id="GO:0050567">
    <property type="term" value="F:glutaminyl-tRNA synthase (glutamine-hydrolyzing) activity"/>
    <property type="evidence" value="ECO:0007669"/>
    <property type="project" value="UniProtKB-UniRule"/>
</dbReference>
<dbReference type="GO" id="GO:0070681">
    <property type="term" value="P:glutaminyl-tRNAGln biosynthesis via transamidation"/>
    <property type="evidence" value="ECO:0007669"/>
    <property type="project" value="TreeGrafter"/>
</dbReference>
<dbReference type="GO" id="GO:0006412">
    <property type="term" value="P:translation"/>
    <property type="evidence" value="ECO:0007669"/>
    <property type="project" value="UniProtKB-UniRule"/>
</dbReference>
<dbReference type="FunFam" id="1.10.10.410:FF:000001">
    <property type="entry name" value="Aspartyl/glutamyl-tRNA(Asn/Gln) amidotransferase subunit B"/>
    <property type="match status" value="1"/>
</dbReference>
<dbReference type="FunFam" id="1.10.150.380:FF:000001">
    <property type="entry name" value="Aspartyl/glutamyl-tRNA(Asn/Gln) amidotransferase subunit B"/>
    <property type="match status" value="1"/>
</dbReference>
<dbReference type="Gene3D" id="1.10.10.410">
    <property type="match status" value="1"/>
</dbReference>
<dbReference type="Gene3D" id="1.10.150.380">
    <property type="entry name" value="GatB domain, N-terminal subdomain"/>
    <property type="match status" value="1"/>
</dbReference>
<dbReference type="HAMAP" id="MF_00121">
    <property type="entry name" value="GatB"/>
    <property type="match status" value="1"/>
</dbReference>
<dbReference type="InterPro" id="IPR017959">
    <property type="entry name" value="Asn/Gln-tRNA_amidoTrfase_suB/E"/>
</dbReference>
<dbReference type="InterPro" id="IPR006075">
    <property type="entry name" value="Asn/Gln-tRNA_Trfase_suB/E_cat"/>
</dbReference>
<dbReference type="InterPro" id="IPR018027">
    <property type="entry name" value="Asn/Gln_amidotransferase"/>
</dbReference>
<dbReference type="InterPro" id="IPR003789">
    <property type="entry name" value="Asn/Gln_tRNA_amidoTrase-B-like"/>
</dbReference>
<dbReference type="InterPro" id="IPR004413">
    <property type="entry name" value="GatB"/>
</dbReference>
<dbReference type="InterPro" id="IPR042114">
    <property type="entry name" value="GatB_C_1"/>
</dbReference>
<dbReference type="InterPro" id="IPR023168">
    <property type="entry name" value="GatB_Yqey_C_2"/>
</dbReference>
<dbReference type="InterPro" id="IPR017958">
    <property type="entry name" value="Gln-tRNA_amidoTrfase_suB_CS"/>
</dbReference>
<dbReference type="InterPro" id="IPR014746">
    <property type="entry name" value="Gln_synth/guanido_kin_cat_dom"/>
</dbReference>
<dbReference type="NCBIfam" id="TIGR00133">
    <property type="entry name" value="gatB"/>
    <property type="match status" value="1"/>
</dbReference>
<dbReference type="NCBIfam" id="NF004012">
    <property type="entry name" value="PRK05477.1-2"/>
    <property type="match status" value="1"/>
</dbReference>
<dbReference type="NCBIfam" id="NF004014">
    <property type="entry name" value="PRK05477.1-4"/>
    <property type="match status" value="1"/>
</dbReference>
<dbReference type="NCBIfam" id="NF004015">
    <property type="entry name" value="PRK05477.1-5"/>
    <property type="match status" value="1"/>
</dbReference>
<dbReference type="PANTHER" id="PTHR11659">
    <property type="entry name" value="GLUTAMYL-TRNA GLN AMIDOTRANSFERASE SUBUNIT B MITOCHONDRIAL AND PROKARYOTIC PET112-RELATED"/>
    <property type="match status" value="1"/>
</dbReference>
<dbReference type="PANTHER" id="PTHR11659:SF0">
    <property type="entry name" value="GLUTAMYL-TRNA(GLN) AMIDOTRANSFERASE SUBUNIT B, MITOCHONDRIAL"/>
    <property type="match status" value="1"/>
</dbReference>
<dbReference type="Pfam" id="PF02934">
    <property type="entry name" value="GatB_N"/>
    <property type="match status" value="1"/>
</dbReference>
<dbReference type="Pfam" id="PF02637">
    <property type="entry name" value="GatB_Yqey"/>
    <property type="match status" value="1"/>
</dbReference>
<dbReference type="SMART" id="SM00845">
    <property type="entry name" value="GatB_Yqey"/>
    <property type="match status" value="1"/>
</dbReference>
<dbReference type="SUPFAM" id="SSF89095">
    <property type="entry name" value="GatB/YqeY motif"/>
    <property type="match status" value="1"/>
</dbReference>
<dbReference type="SUPFAM" id="SSF55931">
    <property type="entry name" value="Glutamine synthetase/guanido kinase"/>
    <property type="match status" value="1"/>
</dbReference>
<dbReference type="PROSITE" id="PS01234">
    <property type="entry name" value="GATB"/>
    <property type="match status" value="1"/>
</dbReference>
<organism>
    <name type="scientific">Nitrobacter hamburgensis (strain DSM 10229 / NCIMB 13809 / X14)</name>
    <dbReference type="NCBI Taxonomy" id="323097"/>
    <lineage>
        <taxon>Bacteria</taxon>
        <taxon>Pseudomonadati</taxon>
        <taxon>Pseudomonadota</taxon>
        <taxon>Alphaproteobacteria</taxon>
        <taxon>Hyphomicrobiales</taxon>
        <taxon>Nitrobacteraceae</taxon>
        <taxon>Nitrobacter</taxon>
    </lineage>
</organism>
<feature type="chain" id="PRO_1000016009" description="Aspartyl/glutamyl-tRNA(Asn/Gln) amidotransferase subunit B">
    <location>
        <begin position="1"/>
        <end position="494"/>
    </location>
</feature>
<reference key="1">
    <citation type="submission" date="2006-03" db="EMBL/GenBank/DDBJ databases">
        <title>Complete sequence of chromosome of Nitrobacter hamburgensis X14.</title>
        <authorList>
            <consortium name="US DOE Joint Genome Institute"/>
            <person name="Copeland A."/>
            <person name="Lucas S."/>
            <person name="Lapidus A."/>
            <person name="Barry K."/>
            <person name="Detter J.C."/>
            <person name="Glavina del Rio T."/>
            <person name="Hammon N."/>
            <person name="Israni S."/>
            <person name="Dalin E."/>
            <person name="Tice H."/>
            <person name="Pitluck S."/>
            <person name="Chain P."/>
            <person name="Malfatti S."/>
            <person name="Shin M."/>
            <person name="Vergez L."/>
            <person name="Schmutz J."/>
            <person name="Larimer F."/>
            <person name="Land M."/>
            <person name="Hauser L."/>
            <person name="Kyrpides N."/>
            <person name="Ivanova N."/>
            <person name="Ward B."/>
            <person name="Arp D."/>
            <person name="Klotz M."/>
            <person name="Stein L."/>
            <person name="O'Mullan G."/>
            <person name="Starkenburg S."/>
            <person name="Sayavedra L."/>
            <person name="Poret-Peterson A.T."/>
            <person name="Gentry M.E."/>
            <person name="Bruce D."/>
            <person name="Richardson P."/>
        </authorList>
    </citation>
    <scope>NUCLEOTIDE SEQUENCE [LARGE SCALE GENOMIC DNA]</scope>
    <source>
        <strain>DSM 10229 / NCIMB 13809 / X14</strain>
    </source>
</reference>
<protein>
    <recommendedName>
        <fullName evidence="1">Aspartyl/glutamyl-tRNA(Asn/Gln) amidotransferase subunit B</fullName>
        <shortName evidence="1">Asp/Glu-ADT subunit B</shortName>
        <ecNumber evidence="1">6.3.5.-</ecNumber>
    </recommendedName>
</protein>
<keyword id="KW-0067">ATP-binding</keyword>
<keyword id="KW-0436">Ligase</keyword>
<keyword id="KW-0547">Nucleotide-binding</keyword>
<keyword id="KW-0648">Protein biosynthesis</keyword>
<keyword id="KW-1185">Reference proteome</keyword>
<accession>Q1QL34</accession>
<name>GATB_NITHX</name>
<gene>
    <name evidence="1" type="primary">gatB</name>
    <name type="ordered locus">Nham_2271</name>
</gene>